<evidence type="ECO:0000250" key="1"/>
<evidence type="ECO:0000305" key="2"/>
<name>GATA_CHLMU</name>
<keyword id="KW-0067">ATP-binding</keyword>
<keyword id="KW-0436">Ligase</keyword>
<keyword id="KW-0547">Nucleotide-binding</keyword>
<keyword id="KW-0648">Protein biosynthesis</keyword>
<accession>Q9PL37</accession>
<comment type="function">
    <text evidence="1">Allows the formation of correctly charged Gln-tRNA(Gln) through the transamidation of misacylated Glu-tRNA(Gln) in organisms which lack glutaminyl-tRNA synthetase. The reaction takes place in the presence of glutamine and ATP through an activated gamma-phospho-Glu-tRNA(Gln) (By similarity).</text>
</comment>
<comment type="catalytic activity">
    <reaction>
        <text>L-glutamyl-tRNA(Gln) + L-glutamine + ATP + H2O = L-glutaminyl-tRNA(Gln) + L-glutamate + ADP + phosphate + H(+)</text>
        <dbReference type="Rhea" id="RHEA:17521"/>
        <dbReference type="Rhea" id="RHEA-COMP:9681"/>
        <dbReference type="Rhea" id="RHEA-COMP:9684"/>
        <dbReference type="ChEBI" id="CHEBI:15377"/>
        <dbReference type="ChEBI" id="CHEBI:15378"/>
        <dbReference type="ChEBI" id="CHEBI:29985"/>
        <dbReference type="ChEBI" id="CHEBI:30616"/>
        <dbReference type="ChEBI" id="CHEBI:43474"/>
        <dbReference type="ChEBI" id="CHEBI:58359"/>
        <dbReference type="ChEBI" id="CHEBI:78520"/>
        <dbReference type="ChEBI" id="CHEBI:78521"/>
        <dbReference type="ChEBI" id="CHEBI:456216"/>
        <dbReference type="EC" id="6.3.5.7"/>
    </reaction>
</comment>
<comment type="subunit">
    <text evidence="1">Heterotrimer of A, B and C subunits.</text>
</comment>
<comment type="similarity">
    <text evidence="2">Belongs to the amidase family. GatA subfamily.</text>
</comment>
<dbReference type="EC" id="6.3.5.7"/>
<dbReference type="EMBL" id="AE002160">
    <property type="protein sequence ID" value="AAF39139.1"/>
    <property type="molecule type" value="Genomic_DNA"/>
</dbReference>
<dbReference type="PIR" id="A81722">
    <property type="entry name" value="A81722"/>
</dbReference>
<dbReference type="RefSeq" id="WP_010229994.1">
    <property type="nucleotide sequence ID" value="NZ_CP063055.1"/>
</dbReference>
<dbReference type="SMR" id="Q9PL37"/>
<dbReference type="GeneID" id="1246441"/>
<dbReference type="KEGG" id="cmu:TC_0271"/>
<dbReference type="eggNOG" id="COG0154">
    <property type="taxonomic scope" value="Bacteria"/>
</dbReference>
<dbReference type="HOGENOM" id="CLU_009600_0_3_0"/>
<dbReference type="OrthoDB" id="9811471at2"/>
<dbReference type="Proteomes" id="UP000000800">
    <property type="component" value="Chromosome"/>
</dbReference>
<dbReference type="GO" id="GO:0030956">
    <property type="term" value="C:glutamyl-tRNA(Gln) amidotransferase complex"/>
    <property type="evidence" value="ECO:0007669"/>
    <property type="project" value="InterPro"/>
</dbReference>
<dbReference type="GO" id="GO:0005524">
    <property type="term" value="F:ATP binding"/>
    <property type="evidence" value="ECO:0007669"/>
    <property type="project" value="UniProtKB-KW"/>
</dbReference>
<dbReference type="GO" id="GO:0050567">
    <property type="term" value="F:glutaminyl-tRNA synthase (glutamine-hydrolyzing) activity"/>
    <property type="evidence" value="ECO:0007669"/>
    <property type="project" value="UniProtKB-UniRule"/>
</dbReference>
<dbReference type="GO" id="GO:0006412">
    <property type="term" value="P:translation"/>
    <property type="evidence" value="ECO:0007669"/>
    <property type="project" value="UniProtKB-UniRule"/>
</dbReference>
<dbReference type="Gene3D" id="3.90.1300.10">
    <property type="entry name" value="Amidase signature (AS) domain"/>
    <property type="match status" value="1"/>
</dbReference>
<dbReference type="HAMAP" id="MF_00120">
    <property type="entry name" value="GatA"/>
    <property type="match status" value="1"/>
</dbReference>
<dbReference type="InterPro" id="IPR000120">
    <property type="entry name" value="Amidase"/>
</dbReference>
<dbReference type="InterPro" id="IPR020556">
    <property type="entry name" value="Amidase_CS"/>
</dbReference>
<dbReference type="InterPro" id="IPR023631">
    <property type="entry name" value="Amidase_dom"/>
</dbReference>
<dbReference type="InterPro" id="IPR036928">
    <property type="entry name" value="AS_sf"/>
</dbReference>
<dbReference type="InterPro" id="IPR004412">
    <property type="entry name" value="GatA"/>
</dbReference>
<dbReference type="NCBIfam" id="TIGR00132">
    <property type="entry name" value="gatA"/>
    <property type="match status" value="1"/>
</dbReference>
<dbReference type="PANTHER" id="PTHR11895:SF151">
    <property type="entry name" value="GLUTAMYL-TRNA(GLN) AMIDOTRANSFERASE SUBUNIT A"/>
    <property type="match status" value="1"/>
</dbReference>
<dbReference type="PANTHER" id="PTHR11895">
    <property type="entry name" value="TRANSAMIDASE"/>
    <property type="match status" value="1"/>
</dbReference>
<dbReference type="Pfam" id="PF01425">
    <property type="entry name" value="Amidase"/>
    <property type="match status" value="1"/>
</dbReference>
<dbReference type="SUPFAM" id="SSF75304">
    <property type="entry name" value="Amidase signature (AS) enzymes"/>
    <property type="match status" value="1"/>
</dbReference>
<dbReference type="PROSITE" id="PS00571">
    <property type="entry name" value="AMIDASES"/>
    <property type="match status" value="1"/>
</dbReference>
<reference key="1">
    <citation type="journal article" date="2000" name="Nucleic Acids Res.">
        <title>Genome sequences of Chlamydia trachomatis MoPn and Chlamydia pneumoniae AR39.</title>
        <authorList>
            <person name="Read T.D."/>
            <person name="Brunham R.C."/>
            <person name="Shen C."/>
            <person name="Gill S.R."/>
            <person name="Heidelberg J.F."/>
            <person name="White O."/>
            <person name="Hickey E.K."/>
            <person name="Peterson J.D."/>
            <person name="Utterback T.R."/>
            <person name="Berry K.J."/>
            <person name="Bass S."/>
            <person name="Linher K.D."/>
            <person name="Weidman J.F."/>
            <person name="Khouri H.M."/>
            <person name="Craven B."/>
            <person name="Bowman C."/>
            <person name="Dodson R.J."/>
            <person name="Gwinn M.L."/>
            <person name="Nelson W.C."/>
            <person name="DeBoy R.T."/>
            <person name="Kolonay J.F."/>
            <person name="McClarty G."/>
            <person name="Salzberg S.L."/>
            <person name="Eisen J.A."/>
            <person name="Fraser C.M."/>
        </authorList>
    </citation>
    <scope>NUCLEOTIDE SEQUENCE [LARGE SCALE GENOMIC DNA]</scope>
    <source>
        <strain>MoPn / Nigg</strain>
    </source>
</reference>
<gene>
    <name type="primary">gatA</name>
    <name type="ordered locus">TC_0271</name>
</gene>
<proteinExistence type="inferred from homology"/>
<sequence>MYRKSALELRDAVVNREISVTAITEYFYHRIESYDEQIGSFLSLCKERALLRASRIDDKLAKGDPIGILAGIPIGVKDNIHITGVKTTCASKMLENFVAPFDATVVRRIEMEDGILLGKLNMDEFAMGSTTRYSAFQHTNNPWDLERVPGGSSGGSAAAVSARFCPIALGSDTGGSIRQPAAFCGVVGFKPSYGAVSRYGLVAFGSSLDQIGPLTTVVEDVALAMDAFAGRDIKDATTRDFFRGTFSQALSLEVPKLIGVPRGFLDGLQEDCKENFFEALAVMERQGSRIIDIDLSVLKHAVPVYYIVASAEAATNLARFDGVRYGHRCAQADNMQEMYARSRKEGFGKEVTRRILLGNYVLSAERQNIFYKKGTAVRATLIEAFQSAFECCDVIAMPVCASPAIRDTDVLDPVSLYLQDIYTVAVNLAYLPAISVPSGLSKEGLPLGVQFIGKRGADQQICQVGYSFQEHSQIKQLYPKAVNGLFDGGME</sequence>
<organism>
    <name type="scientific">Chlamydia muridarum (strain MoPn / Nigg)</name>
    <dbReference type="NCBI Taxonomy" id="243161"/>
    <lineage>
        <taxon>Bacteria</taxon>
        <taxon>Pseudomonadati</taxon>
        <taxon>Chlamydiota</taxon>
        <taxon>Chlamydiia</taxon>
        <taxon>Chlamydiales</taxon>
        <taxon>Chlamydiaceae</taxon>
        <taxon>Chlamydia/Chlamydophila group</taxon>
        <taxon>Chlamydia</taxon>
    </lineage>
</organism>
<feature type="chain" id="PRO_0000105150" description="Glutamyl-tRNA(Gln) amidotransferase subunit A">
    <location>
        <begin position="1"/>
        <end position="491"/>
    </location>
</feature>
<feature type="active site" description="Charge relay system" evidence="1">
    <location>
        <position position="77"/>
    </location>
</feature>
<feature type="active site" description="Charge relay system" evidence="1">
    <location>
        <position position="152"/>
    </location>
</feature>
<feature type="active site" description="Acyl-ester intermediate" evidence="1">
    <location>
        <position position="176"/>
    </location>
</feature>
<protein>
    <recommendedName>
        <fullName>Glutamyl-tRNA(Gln) amidotransferase subunit A</fullName>
        <shortName>Glu-ADT subunit A</shortName>
        <ecNumber>6.3.5.7</ecNumber>
    </recommendedName>
</protein>